<dbReference type="EC" id="3.6.4.-"/>
<dbReference type="EMBL" id="AB016874">
    <property type="protein sequence ID" value="BAB08833.1"/>
    <property type="status" value="ALT_SEQ"/>
    <property type="molecule type" value="Genomic_DNA"/>
</dbReference>
<dbReference type="EMBL" id="AC002342">
    <property type="protein sequence ID" value="AAC79140.1"/>
    <property type="status" value="ALT_SEQ"/>
    <property type="molecule type" value="Genomic_DNA"/>
</dbReference>
<dbReference type="EMBL" id="CP002688">
    <property type="protein sequence ID" value="AED95164.1"/>
    <property type="molecule type" value="Genomic_DNA"/>
</dbReference>
<dbReference type="EMBL" id="AK118410">
    <property type="protein sequence ID" value="BAC43019.1"/>
    <property type="status" value="ALT_INIT"/>
    <property type="molecule type" value="mRNA"/>
</dbReference>
<dbReference type="RefSeq" id="NP_199293.3">
    <property type="nucleotide sequence ID" value="NM_123848.4"/>
</dbReference>
<dbReference type="SMR" id="F4KBP5"/>
<dbReference type="BioGRID" id="19760">
    <property type="interactions" value="8"/>
</dbReference>
<dbReference type="FunCoup" id="F4KBP5">
    <property type="interactions" value="656"/>
</dbReference>
<dbReference type="STRING" id="3702.F4KBP5"/>
<dbReference type="GlyGen" id="F4KBP5">
    <property type="glycosylation" value="4 sites, 1 O-linked glycan (4 sites)"/>
</dbReference>
<dbReference type="iPTMnet" id="F4KBP5"/>
<dbReference type="PaxDb" id="3702-AT5G44800.1"/>
<dbReference type="ProteomicsDB" id="247003"/>
<dbReference type="EnsemblPlants" id="AT5G44800.1">
    <property type="protein sequence ID" value="AT5G44800.1"/>
    <property type="gene ID" value="AT5G44800"/>
</dbReference>
<dbReference type="GeneID" id="834510"/>
<dbReference type="Gramene" id="AT5G44800.1">
    <property type="protein sequence ID" value="AT5G44800.1"/>
    <property type="gene ID" value="AT5G44800"/>
</dbReference>
<dbReference type="KEGG" id="ath:AT5G44800"/>
<dbReference type="Araport" id="AT5G44800"/>
<dbReference type="TAIR" id="AT5G44800">
    <property type="gene designation" value="CHR4"/>
</dbReference>
<dbReference type="eggNOG" id="KOG0383">
    <property type="taxonomic scope" value="Eukaryota"/>
</dbReference>
<dbReference type="HOGENOM" id="CLU_000994_1_1_1"/>
<dbReference type="InParanoid" id="F4KBP5"/>
<dbReference type="OMA" id="GLAYDEC"/>
<dbReference type="PRO" id="PR:F4KBP5"/>
<dbReference type="Proteomes" id="UP000006548">
    <property type="component" value="Chromosome 5"/>
</dbReference>
<dbReference type="ExpressionAtlas" id="F4KBP5">
    <property type="expression patterns" value="baseline and differential"/>
</dbReference>
<dbReference type="GO" id="GO:0042735">
    <property type="term" value="C:endosperm protein body"/>
    <property type="evidence" value="ECO:0000353"/>
    <property type="project" value="TAIR"/>
</dbReference>
<dbReference type="GO" id="GO:0005634">
    <property type="term" value="C:nucleus"/>
    <property type="evidence" value="ECO:0000314"/>
    <property type="project" value="TAIR"/>
</dbReference>
<dbReference type="GO" id="GO:0009506">
    <property type="term" value="C:plasmodesma"/>
    <property type="evidence" value="ECO:0007005"/>
    <property type="project" value="TAIR"/>
</dbReference>
<dbReference type="GO" id="GO:0005524">
    <property type="term" value="F:ATP binding"/>
    <property type="evidence" value="ECO:0007669"/>
    <property type="project" value="UniProtKB-KW"/>
</dbReference>
<dbReference type="GO" id="GO:0003677">
    <property type="term" value="F:DNA binding"/>
    <property type="evidence" value="ECO:0007669"/>
    <property type="project" value="UniProtKB-KW"/>
</dbReference>
<dbReference type="GO" id="GO:0004386">
    <property type="term" value="F:helicase activity"/>
    <property type="evidence" value="ECO:0007669"/>
    <property type="project" value="UniProtKB-KW"/>
</dbReference>
<dbReference type="GO" id="GO:0016787">
    <property type="term" value="F:hydrolase activity"/>
    <property type="evidence" value="ECO:0007669"/>
    <property type="project" value="UniProtKB-KW"/>
</dbReference>
<dbReference type="GO" id="GO:0008270">
    <property type="term" value="F:zinc ion binding"/>
    <property type="evidence" value="ECO:0007669"/>
    <property type="project" value="UniProtKB-KW"/>
</dbReference>
<dbReference type="GO" id="GO:0006325">
    <property type="term" value="P:chromatin organization"/>
    <property type="evidence" value="ECO:0007669"/>
    <property type="project" value="UniProtKB-KW"/>
</dbReference>
<dbReference type="CDD" id="cd18660">
    <property type="entry name" value="CD1_tandem"/>
    <property type="match status" value="1"/>
</dbReference>
<dbReference type="CDD" id="cd18659">
    <property type="entry name" value="CD2_tandem"/>
    <property type="match status" value="1"/>
</dbReference>
<dbReference type="CDD" id="cd15532">
    <property type="entry name" value="PHD2_CHD_II"/>
    <property type="match status" value="1"/>
</dbReference>
<dbReference type="CDD" id="cd11660">
    <property type="entry name" value="SANT_TRF"/>
    <property type="match status" value="1"/>
</dbReference>
<dbReference type="CDD" id="cd18793">
    <property type="entry name" value="SF2_C_SNF"/>
    <property type="match status" value="1"/>
</dbReference>
<dbReference type="FunFam" id="3.40.50.300:FF:000607">
    <property type="entry name" value="chromodomain-helicase-DNA-binding protein 1-like isoform X1"/>
    <property type="match status" value="1"/>
</dbReference>
<dbReference type="FunFam" id="1.10.10.60:FF:000636">
    <property type="entry name" value="Protein CHROMATIN REMODELING 4"/>
    <property type="match status" value="1"/>
</dbReference>
<dbReference type="Gene3D" id="2.40.50.40">
    <property type="match status" value="2"/>
</dbReference>
<dbReference type="Gene3D" id="1.10.10.60">
    <property type="entry name" value="Homeodomain-like"/>
    <property type="match status" value="1"/>
</dbReference>
<dbReference type="Gene3D" id="3.40.50.300">
    <property type="entry name" value="P-loop containing nucleotide triphosphate hydrolases"/>
    <property type="match status" value="1"/>
</dbReference>
<dbReference type="Gene3D" id="3.40.50.10810">
    <property type="entry name" value="Tandem AAA-ATPase domain"/>
    <property type="match status" value="1"/>
</dbReference>
<dbReference type="Gene3D" id="3.30.40.10">
    <property type="entry name" value="Zinc/RING finger domain, C3HC4 (zinc finger)"/>
    <property type="match status" value="1"/>
</dbReference>
<dbReference type="InterPro" id="IPR016197">
    <property type="entry name" value="Chromo-like_dom_sf"/>
</dbReference>
<dbReference type="InterPro" id="IPR000953">
    <property type="entry name" value="Chromo/chromo_shadow_dom"/>
</dbReference>
<dbReference type="InterPro" id="IPR023780">
    <property type="entry name" value="Chromo_domain"/>
</dbReference>
<dbReference type="InterPro" id="IPR009463">
    <property type="entry name" value="DUF1087"/>
</dbReference>
<dbReference type="InterPro" id="IPR014001">
    <property type="entry name" value="Helicase_ATP-bd"/>
</dbReference>
<dbReference type="InterPro" id="IPR001650">
    <property type="entry name" value="Helicase_C-like"/>
</dbReference>
<dbReference type="InterPro" id="IPR009057">
    <property type="entry name" value="Homeodomain-like_sf"/>
</dbReference>
<dbReference type="InterPro" id="IPR027417">
    <property type="entry name" value="P-loop_NTPase"/>
</dbReference>
<dbReference type="InterPro" id="IPR038718">
    <property type="entry name" value="SNF2-like_sf"/>
</dbReference>
<dbReference type="InterPro" id="IPR049730">
    <property type="entry name" value="SNF2/RAD54-like_C"/>
</dbReference>
<dbReference type="InterPro" id="IPR000330">
    <property type="entry name" value="SNF2_N"/>
</dbReference>
<dbReference type="InterPro" id="IPR019786">
    <property type="entry name" value="Zinc_finger_PHD-type_CS"/>
</dbReference>
<dbReference type="InterPro" id="IPR011011">
    <property type="entry name" value="Znf_FYVE_PHD"/>
</dbReference>
<dbReference type="InterPro" id="IPR001965">
    <property type="entry name" value="Znf_PHD"/>
</dbReference>
<dbReference type="InterPro" id="IPR019787">
    <property type="entry name" value="Znf_PHD-finger"/>
</dbReference>
<dbReference type="InterPro" id="IPR013083">
    <property type="entry name" value="Znf_RING/FYVE/PHD"/>
</dbReference>
<dbReference type="PANTHER" id="PTHR45623">
    <property type="entry name" value="CHROMODOMAIN-HELICASE-DNA-BINDING PROTEIN 3-RELATED-RELATED"/>
    <property type="match status" value="1"/>
</dbReference>
<dbReference type="PANTHER" id="PTHR45623:SF28">
    <property type="entry name" value="PROTEIN CHROMATIN REMODELING 4"/>
    <property type="match status" value="1"/>
</dbReference>
<dbReference type="Pfam" id="PF00385">
    <property type="entry name" value="Chromo"/>
    <property type="match status" value="1"/>
</dbReference>
<dbReference type="Pfam" id="PF06465">
    <property type="entry name" value="DUF1087"/>
    <property type="match status" value="1"/>
</dbReference>
<dbReference type="Pfam" id="PF00271">
    <property type="entry name" value="Helicase_C"/>
    <property type="match status" value="1"/>
</dbReference>
<dbReference type="Pfam" id="PF00628">
    <property type="entry name" value="PHD"/>
    <property type="match status" value="1"/>
</dbReference>
<dbReference type="Pfam" id="PF00176">
    <property type="entry name" value="SNF2-rel_dom"/>
    <property type="match status" value="1"/>
</dbReference>
<dbReference type="SMART" id="SM00298">
    <property type="entry name" value="CHROMO"/>
    <property type="match status" value="2"/>
</dbReference>
<dbReference type="SMART" id="SM00487">
    <property type="entry name" value="DEXDc"/>
    <property type="match status" value="1"/>
</dbReference>
<dbReference type="SMART" id="SM01147">
    <property type="entry name" value="DUF1087"/>
    <property type="match status" value="1"/>
</dbReference>
<dbReference type="SMART" id="SM00490">
    <property type="entry name" value="HELICc"/>
    <property type="match status" value="1"/>
</dbReference>
<dbReference type="SMART" id="SM00249">
    <property type="entry name" value="PHD"/>
    <property type="match status" value="1"/>
</dbReference>
<dbReference type="SUPFAM" id="SSF54160">
    <property type="entry name" value="Chromo domain-like"/>
    <property type="match status" value="2"/>
</dbReference>
<dbReference type="SUPFAM" id="SSF57903">
    <property type="entry name" value="FYVE/PHD zinc finger"/>
    <property type="match status" value="1"/>
</dbReference>
<dbReference type="SUPFAM" id="SSF46689">
    <property type="entry name" value="Homeodomain-like"/>
    <property type="match status" value="1"/>
</dbReference>
<dbReference type="SUPFAM" id="SSF52540">
    <property type="entry name" value="P-loop containing nucleoside triphosphate hydrolases"/>
    <property type="match status" value="2"/>
</dbReference>
<dbReference type="PROSITE" id="PS50013">
    <property type="entry name" value="CHROMO_2"/>
    <property type="match status" value="2"/>
</dbReference>
<dbReference type="PROSITE" id="PS51192">
    <property type="entry name" value="HELICASE_ATP_BIND_1"/>
    <property type="match status" value="1"/>
</dbReference>
<dbReference type="PROSITE" id="PS51194">
    <property type="entry name" value="HELICASE_CTER"/>
    <property type="match status" value="1"/>
</dbReference>
<dbReference type="PROSITE" id="PS01359">
    <property type="entry name" value="ZF_PHD_1"/>
    <property type="match status" value="1"/>
</dbReference>
<dbReference type="PROSITE" id="PS50016">
    <property type="entry name" value="ZF_PHD_2"/>
    <property type="match status" value="1"/>
</dbReference>
<comment type="function">
    <text evidence="1 10">Chromatin-remodeling protein that binds DNA through histones and regulates gene transcription. May specifically recognize and bind trimethylated 'Lys-27' (H3K27me3) and non-methylated 'Lys-4' of histone H3 (By similarity). Probable chromatin remodeling factor.</text>
</comment>
<comment type="subcellular location">
    <subcellularLocation>
        <location evidence="7">Nucleus</location>
    </subcellularLocation>
</comment>
<comment type="similarity">
    <text evidence="11">Belongs to the SNF2/RAD54 helicase family.</text>
</comment>
<comment type="sequence caution">
    <conflict type="erroneous gene model prediction">
        <sequence resource="EMBL-CDS" id="AAC79140"/>
    </conflict>
</comment>
<comment type="sequence caution">
    <conflict type="erroneous gene model prediction">
        <sequence resource="EMBL-CDS" id="BAB08833"/>
    </conflict>
</comment>
<comment type="sequence caution">
    <conflict type="erroneous initiation">
        <sequence resource="EMBL-CDS" id="BAC43019"/>
    </conflict>
    <text>Truncated N-terminus.</text>
</comment>
<organism evidence="15">
    <name type="scientific">Arabidopsis thaliana</name>
    <name type="common">Mouse-ear cress</name>
    <dbReference type="NCBI Taxonomy" id="3702"/>
    <lineage>
        <taxon>Eukaryota</taxon>
        <taxon>Viridiplantae</taxon>
        <taxon>Streptophyta</taxon>
        <taxon>Embryophyta</taxon>
        <taxon>Tracheophyta</taxon>
        <taxon>Spermatophyta</taxon>
        <taxon>Magnoliopsida</taxon>
        <taxon>eudicotyledons</taxon>
        <taxon>Gunneridae</taxon>
        <taxon>Pentapetalae</taxon>
        <taxon>rosids</taxon>
        <taxon>malvids</taxon>
        <taxon>Brassicales</taxon>
        <taxon>Brassicaceae</taxon>
        <taxon>Camelineae</taxon>
        <taxon>Arabidopsis</taxon>
    </lineage>
</organism>
<protein>
    <recommendedName>
        <fullName evidence="10">Protein CHROMATIN REMODELING 4</fullName>
        <shortName>AtCHR4</shortName>
        <ecNumber>3.6.4.-</ecNumber>
    </recommendedName>
    <alternativeName>
        <fullName evidence="9">Protein PICKLE RELATED 1</fullName>
    </alternativeName>
</protein>
<sequence>MKDSGSEMIKRDWVMKQKRRKLPSILDILDQKVDSSMAFDSPEYTSSSKPSKQRLKTDSTPERNSSKRKGNDGNYFECVICDLGGDLLCCDSCPRTYHTACLNPPLKRIPNGKWICPKCSPNSEALKPVNRLDAIAKRARTKTKKRNSKAGPKCERASQIYCSSIISGEQSSEKGKSISAEESKSTGKEVYSSPMDGCSTAELGHASADDRPDSSSHGEDDLGKPVIPTADLPSDAGLTLLSCEDLSESKLSDTEKTHEAPVEKLEHASSEIVENKTVAEMETGKGKRKKRKRELNDGESLERCKTDKKRAKKSLSKVGSSSQTTKSPESSKKKKKKNRVTLKSLSKPQSKTETPEKVKKLPKEERRAVRATNKSSSCLEDTNSLPVGNLQVHRVLGCRIQGLTKTSLCSALSDDLCSDNLQATDQRDSLVQDTNAELVVAEDRIDSSSETGKSSRDSRLRDKDMDDSALGTEGMVEVKEEMLSEDISNATLSRHVDDEDMKVSETHVSVERELLEEAHQETGEKSTVADEEIEEPVAAKTSDLIGETVSYEFLVKWVDKSNIHNTWISEAELKGLAKRKLENYKAKYGTAVINICEDKWKQPQRIVALRVSKEGNQEAYVKWTGLAYDECTWESLEEPILKHSSHLIDLFHQYEQKTLERNSKGNPTRERGEVVTLTEQPQELRGGALFAHQLEALNWLRRCWHKSKNVILADEMGLGKTVSASAFLSSLYFEFGVARPCLVLVPLSTMPNWLSEFSLWAPLLNVVEYHGSAKGRAIIRDYEWHAKNSTGTTKKPTSYKFNVLLTTYEMVLADSSHLRGVPWEVLVVDEGHRLKNSESKLFSLLNTFSFQHRVLLTGTPLQNNIGEMYNLLNFLQPSSFPSLSSFEERFHDLTSAEKVEELKKLVAPHMLRRLKKDAMQNIPPKTERMVPVELTSIQAEYYRAMLTKNYQILRNIGKGVAQQSMLNIVMQLRKVCNHPYLIPGTEPESGSLEFLHDMRIKASAKLTLLHSMLKVLHKEGHRVLIFSQMTKLLDILEDYLNIEFGPKTFERVDGSVAVADRQAAIARFNQDKNRFVFLLSTRACGLGINLATADTVIIYDSDFNPHADIQAMNRAHRIGQSKRLLVYRLVVRASVEERILQLAKKKLMLDQLFVNKSGSQKEFEDILRWGTEELFNDSAGENKKDTAESNGNLDVIMDLESKSRKKGGGLGDVYQDKCTEGNGKIVWDDIAIMKLLDRSNLQSASTDAADTELDNDMLGSVKPVEWNEETAEEQVGAESPALVTDDTGEPSSERKDDDVVNFTEENEWDRLLRMRWEKYQSEEEAALGRGKRLRKAVSYREAYAPHTSGPVNESGGEDEKEPEPELKKEYTPAGRALKEKFTKLRERQKNLIARRNSVEESLPSGNVDQVTEVANQDEESPTSMDLDDSKASQQCDAQKRKASSSDPKPDLLSQHHHGAECLPSLPPNNLPVLGLCAPNFTQSESSRRNYSRPGSRQNRPITGPHFPFNLPQTSNLVEREANDQEPPMGKLKPQNIKEEPFQQPLSNMDGWLPHRQFPPSGDFERPRSSGAAFADFQEKFPLLNLPFDDKLLPRFPFQPRTMGTSHQDIMANLSMRKRFEGTGHSMQDLFGGTPMPFLPNMKIPPMDPPVFNQQEKDLPPLGLDQFPSALSSIPENHRKVLENIMLRTGSGIGHVQKKKTRVDAWSEDELDSLWIGIRRHGYGNWETILRDPRLKFSKFKTPEYLAARWEEEQRKFLDSLSSLPSKSSRTDKSTKSSLFPGLPQGIMNRALHGKYATPPRFQSHLTDIKLGFGDLASPLPLFEPSDHLGFRSEHFPPMANLCTDNLPGEPSAGPSERAGTSTNIPNEKPFPLNSLGMGNLGSLGLDSLSSLNTLRAEEKRDAIKRGKLPLFLDMPLPQMLDSSNNVFLGRSANPSFLHPNRGLNPSNPMGRDIMGISSSENKLPHWLRNVVTVPTVKSPEPPTLPPTVSAIAQSVRVLYGEDSTTIPPFVIPEPPPPAPRDPRHSLRKKRKRKLHSSSQKTTDIGSSSHNAVESSSQGNPQTSATPPLPPPSLAGETSGSSQPKLPPHNLNSTEPLSSEAIIIPPPEEDSVIAAAPSEAPGPSLEGITGTTKSISLESQSSEPETINQDGDLDPETDEKVESERTPLHSDEKQEEQESENALNKQCEPIEAESQNTNAEEEAEAQEEDEESMKMVTGNSLSDD</sequence>
<gene>
    <name evidence="10" type="primary">CHR4</name>
    <name evidence="9" type="synonym">PKR1</name>
    <name evidence="12" type="ordered locus">At5g44800</name>
    <name evidence="14" type="ORF">K23L20_15</name>
    <name evidence="13" type="ORF">T19K24.8</name>
</gene>
<accession>F4KBP5</accession>
<accession>O48579</accession>
<accession>Q8GX65</accession>
<feature type="chain" id="PRO_0000430852" description="Protein CHROMATIN REMODELING 4">
    <location>
        <begin position="1"/>
        <end position="2223"/>
    </location>
</feature>
<feature type="domain" description="Chromo 1" evidence="3">
    <location>
        <begin position="531"/>
        <end position="587"/>
    </location>
</feature>
<feature type="domain" description="Chromo 2" evidence="3">
    <location>
        <begin position="601"/>
        <end position="663"/>
    </location>
</feature>
<feature type="domain" description="Helicase ATP-binding" evidence="5">
    <location>
        <begin position="701"/>
        <end position="878"/>
    </location>
</feature>
<feature type="domain" description="Helicase C-terminal" evidence="6">
    <location>
        <begin position="1008"/>
        <end position="1167"/>
    </location>
</feature>
<feature type="zinc finger region" description="PHD-type" evidence="4">
    <location>
        <begin position="75"/>
        <end position="122"/>
    </location>
</feature>
<feature type="region of interest" description="Disordered" evidence="8">
    <location>
        <begin position="39"/>
        <end position="69"/>
    </location>
</feature>
<feature type="region of interest" description="Disordered" evidence="8">
    <location>
        <begin position="173"/>
        <end position="235"/>
    </location>
</feature>
<feature type="region of interest" description="Disordered" evidence="8">
    <location>
        <begin position="248"/>
        <end position="381"/>
    </location>
</feature>
<feature type="region of interest" description="Disordered" evidence="8">
    <location>
        <begin position="441"/>
        <end position="474"/>
    </location>
</feature>
<feature type="region of interest" description="Disordered" evidence="8">
    <location>
        <begin position="1268"/>
        <end position="1300"/>
    </location>
</feature>
<feature type="region of interest" description="Disordered" evidence="8">
    <location>
        <begin position="1341"/>
        <end position="1380"/>
    </location>
</feature>
<feature type="region of interest" description="Disordered" evidence="8">
    <location>
        <begin position="1394"/>
        <end position="1463"/>
    </location>
</feature>
<feature type="region of interest" description="Disordered" evidence="8">
    <location>
        <begin position="1483"/>
        <end position="1511"/>
    </location>
</feature>
<feature type="region of interest" description="Disordered" evidence="8">
    <location>
        <begin position="1760"/>
        <end position="1779"/>
    </location>
</feature>
<feature type="region of interest" description="Disordered" evidence="8">
    <location>
        <begin position="2006"/>
        <end position="2223"/>
    </location>
</feature>
<feature type="coiled-coil region" evidence="2">
    <location>
        <begin position="1375"/>
        <end position="1402"/>
    </location>
</feature>
<feature type="coiled-coil region" evidence="2">
    <location>
        <begin position="2189"/>
        <end position="2215"/>
    </location>
</feature>
<feature type="short sequence motif" description="DEAH box" evidence="5">
    <location>
        <begin position="829"/>
        <end position="832"/>
    </location>
</feature>
<feature type="short sequence motif" description="Nuclear localization signal" evidence="7">
    <location>
        <begin position="902"/>
        <end position="909"/>
    </location>
</feature>
<feature type="compositionally biased region" description="Basic and acidic residues" evidence="8">
    <location>
        <begin position="55"/>
        <end position="69"/>
    </location>
</feature>
<feature type="compositionally biased region" description="Basic and acidic residues" evidence="8">
    <location>
        <begin position="173"/>
        <end position="187"/>
    </location>
</feature>
<feature type="compositionally biased region" description="Basic and acidic residues" evidence="8">
    <location>
        <begin position="207"/>
        <end position="223"/>
    </location>
</feature>
<feature type="compositionally biased region" description="Basic and acidic residues" evidence="8">
    <location>
        <begin position="248"/>
        <end position="285"/>
    </location>
</feature>
<feature type="compositionally biased region" description="Basic and acidic residues" evidence="8">
    <location>
        <begin position="294"/>
        <end position="305"/>
    </location>
</feature>
<feature type="compositionally biased region" description="Basic residues" evidence="8">
    <location>
        <begin position="306"/>
        <end position="315"/>
    </location>
</feature>
<feature type="compositionally biased region" description="Basic and acidic residues" evidence="8">
    <location>
        <begin position="353"/>
        <end position="368"/>
    </location>
</feature>
<feature type="compositionally biased region" description="Polar residues" evidence="8">
    <location>
        <begin position="372"/>
        <end position="381"/>
    </location>
</feature>
<feature type="compositionally biased region" description="Basic and acidic residues" evidence="8">
    <location>
        <begin position="441"/>
        <end position="466"/>
    </location>
</feature>
<feature type="compositionally biased region" description="Basic and acidic residues" evidence="8">
    <location>
        <begin position="1363"/>
        <end position="1380"/>
    </location>
</feature>
<feature type="compositionally biased region" description="Polar residues" evidence="8">
    <location>
        <begin position="1403"/>
        <end position="1414"/>
    </location>
</feature>
<feature type="compositionally biased region" description="Pro residues" evidence="8">
    <location>
        <begin position="2009"/>
        <end position="2019"/>
    </location>
</feature>
<feature type="compositionally biased region" description="Basic residues" evidence="8">
    <location>
        <begin position="2025"/>
        <end position="2035"/>
    </location>
</feature>
<feature type="compositionally biased region" description="Polar residues" evidence="8">
    <location>
        <begin position="2039"/>
        <end position="2061"/>
    </location>
</feature>
<feature type="compositionally biased region" description="Polar residues" evidence="8">
    <location>
        <begin position="2075"/>
        <end position="2096"/>
    </location>
</feature>
<feature type="compositionally biased region" description="Polar residues" evidence="8">
    <location>
        <begin position="2128"/>
        <end position="2148"/>
    </location>
</feature>
<feature type="compositionally biased region" description="Basic and acidic residues" evidence="8">
    <location>
        <begin position="2157"/>
        <end position="2171"/>
    </location>
</feature>
<feature type="compositionally biased region" description="Acidic residues" evidence="8">
    <location>
        <begin position="2198"/>
        <end position="2210"/>
    </location>
</feature>
<feature type="binding site" evidence="5">
    <location>
        <begin position="714"/>
        <end position="721"/>
    </location>
    <ligand>
        <name>ATP</name>
        <dbReference type="ChEBI" id="CHEBI:30616"/>
    </ligand>
</feature>
<keyword id="KW-0067">ATP-binding</keyword>
<keyword id="KW-0156">Chromatin regulator</keyword>
<keyword id="KW-0175">Coiled coil</keyword>
<keyword id="KW-0238">DNA-binding</keyword>
<keyword id="KW-0347">Helicase</keyword>
<keyword id="KW-0378">Hydrolase</keyword>
<keyword id="KW-0479">Metal-binding</keyword>
<keyword id="KW-0547">Nucleotide-binding</keyword>
<keyword id="KW-0539">Nucleus</keyword>
<keyword id="KW-1185">Reference proteome</keyword>
<keyword id="KW-0677">Repeat</keyword>
<keyword id="KW-0862">Zinc</keyword>
<keyword id="KW-0863">Zinc-finger</keyword>
<proteinExistence type="evidence at transcript level"/>
<name>CHR4_ARATH</name>
<reference key="1">
    <citation type="journal article" date="1998" name="DNA Res.">
        <title>Structural analysis of Arabidopsis thaliana chromosome 5. VIII. Sequence features of the regions of 1,081,958 bp covered by seventeen physically assigned P1 and TAC clones.</title>
        <authorList>
            <person name="Asamizu E."/>
            <person name="Sato S."/>
            <person name="Kaneko T."/>
            <person name="Nakamura Y."/>
            <person name="Kotani H."/>
            <person name="Miyajima N."/>
            <person name="Tabata S."/>
        </authorList>
    </citation>
    <scope>NUCLEOTIDE SEQUENCE [LARGE SCALE GENOMIC DNA]</scope>
    <source>
        <strain>cv. Columbia</strain>
    </source>
</reference>
<reference key="2">
    <citation type="journal article" date="2000" name="Nature">
        <title>Sequence and analysis of chromosome 5 of the plant Arabidopsis thaliana.</title>
        <authorList>
            <person name="Tabata S."/>
            <person name="Kaneko T."/>
            <person name="Nakamura Y."/>
            <person name="Kotani H."/>
            <person name="Kato T."/>
            <person name="Asamizu E."/>
            <person name="Miyajima N."/>
            <person name="Sasamoto S."/>
            <person name="Kimura T."/>
            <person name="Hosouchi T."/>
            <person name="Kawashima K."/>
            <person name="Kohara M."/>
            <person name="Matsumoto M."/>
            <person name="Matsuno A."/>
            <person name="Muraki A."/>
            <person name="Nakayama S."/>
            <person name="Nakazaki N."/>
            <person name="Naruo K."/>
            <person name="Okumura S."/>
            <person name="Shinpo S."/>
            <person name="Takeuchi C."/>
            <person name="Wada T."/>
            <person name="Watanabe A."/>
            <person name="Yamada M."/>
            <person name="Yasuda M."/>
            <person name="Sato S."/>
            <person name="de la Bastide M."/>
            <person name="Huang E."/>
            <person name="Spiegel L."/>
            <person name="Gnoj L."/>
            <person name="O'Shaughnessy A."/>
            <person name="Preston R."/>
            <person name="Habermann K."/>
            <person name="Murray J."/>
            <person name="Johnson D."/>
            <person name="Rohlfing T."/>
            <person name="Nelson J."/>
            <person name="Stoneking T."/>
            <person name="Pepin K."/>
            <person name="Spieth J."/>
            <person name="Sekhon M."/>
            <person name="Armstrong J."/>
            <person name="Becker M."/>
            <person name="Belter E."/>
            <person name="Cordum H."/>
            <person name="Cordes M."/>
            <person name="Courtney L."/>
            <person name="Courtney W."/>
            <person name="Dante M."/>
            <person name="Du H."/>
            <person name="Edwards J."/>
            <person name="Fryman J."/>
            <person name="Haakensen B."/>
            <person name="Lamar E."/>
            <person name="Latreille P."/>
            <person name="Leonard S."/>
            <person name="Meyer R."/>
            <person name="Mulvaney E."/>
            <person name="Ozersky P."/>
            <person name="Riley A."/>
            <person name="Strowmatt C."/>
            <person name="Wagner-McPherson C."/>
            <person name="Wollam A."/>
            <person name="Yoakum M."/>
            <person name="Bell M."/>
            <person name="Dedhia N."/>
            <person name="Parnell L."/>
            <person name="Shah R."/>
            <person name="Rodriguez M."/>
            <person name="Hoon See L."/>
            <person name="Vil D."/>
            <person name="Baker J."/>
            <person name="Kirchoff K."/>
            <person name="Toth K."/>
            <person name="King L."/>
            <person name="Bahret A."/>
            <person name="Miller B."/>
            <person name="Marra M.A."/>
            <person name="Martienssen R."/>
            <person name="McCombie W.R."/>
            <person name="Wilson R.K."/>
            <person name="Murphy G."/>
            <person name="Bancroft I."/>
            <person name="Volckaert G."/>
            <person name="Wambutt R."/>
            <person name="Duesterhoeft A."/>
            <person name="Stiekema W."/>
            <person name="Pohl T."/>
            <person name="Entian K.-D."/>
            <person name="Terryn N."/>
            <person name="Hartley N."/>
            <person name="Bent E."/>
            <person name="Johnson S."/>
            <person name="Langham S.-A."/>
            <person name="McCullagh B."/>
            <person name="Robben J."/>
            <person name="Grymonprez B."/>
            <person name="Zimmermann W."/>
            <person name="Ramsperger U."/>
            <person name="Wedler H."/>
            <person name="Balke K."/>
            <person name="Wedler E."/>
            <person name="Peters S."/>
            <person name="van Staveren M."/>
            <person name="Dirkse W."/>
            <person name="Mooijman P."/>
            <person name="Klein Lankhorst R."/>
            <person name="Weitzenegger T."/>
            <person name="Bothe G."/>
            <person name="Rose M."/>
            <person name="Hauf J."/>
            <person name="Berneiser S."/>
            <person name="Hempel S."/>
            <person name="Feldpausch M."/>
            <person name="Lamberth S."/>
            <person name="Villarroel R."/>
            <person name="Gielen J."/>
            <person name="Ardiles W."/>
            <person name="Bents O."/>
            <person name="Lemcke K."/>
            <person name="Kolesov G."/>
            <person name="Mayer K.F.X."/>
            <person name="Rudd S."/>
            <person name="Schoof H."/>
            <person name="Schueller C."/>
            <person name="Zaccaria P."/>
            <person name="Mewes H.-W."/>
            <person name="Bevan M."/>
            <person name="Fransz P.F."/>
        </authorList>
    </citation>
    <scope>NUCLEOTIDE SEQUENCE [LARGE SCALE GENOMIC DNA]</scope>
    <source>
        <strain>cv. Columbia</strain>
    </source>
</reference>
<reference key="3">
    <citation type="journal article" date="2017" name="Plant J.">
        <title>Araport11: a complete reannotation of the Arabidopsis thaliana reference genome.</title>
        <authorList>
            <person name="Cheng C.Y."/>
            <person name="Krishnakumar V."/>
            <person name="Chan A.P."/>
            <person name="Thibaud-Nissen F."/>
            <person name="Schobel S."/>
            <person name="Town C.D."/>
        </authorList>
    </citation>
    <scope>GENOME REANNOTATION</scope>
    <source>
        <strain>cv. Columbia</strain>
    </source>
</reference>
<reference key="4">
    <citation type="journal article" date="2002" name="Science">
        <title>Functional annotation of a full-length Arabidopsis cDNA collection.</title>
        <authorList>
            <person name="Seki M."/>
            <person name="Narusaka M."/>
            <person name="Kamiya A."/>
            <person name="Ishida J."/>
            <person name="Satou M."/>
            <person name="Sakurai T."/>
            <person name="Nakajima M."/>
            <person name="Enju A."/>
            <person name="Akiyama K."/>
            <person name="Oono Y."/>
            <person name="Muramatsu M."/>
            <person name="Hayashizaki Y."/>
            <person name="Kawai J."/>
            <person name="Carninci P."/>
            <person name="Itoh M."/>
            <person name="Ishii Y."/>
            <person name="Arakawa T."/>
            <person name="Shibata K."/>
            <person name="Shinagawa A."/>
            <person name="Shinozaki K."/>
        </authorList>
    </citation>
    <scope>NUCLEOTIDE SEQUENCE [LARGE SCALE MRNA] OF 1686-2223</scope>
    <source>
        <strain>cv. Columbia</strain>
    </source>
</reference>
<reference key="5">
    <citation type="journal article" date="1999" name="Proc. Natl. Acad. Sci. U.S.A.">
        <title>PICKLE is a CHD3 chromatin-remodeling factor that regulates the transition from embryonic to vegetative development in Arabidopsis.</title>
        <authorList>
            <person name="Ogas J."/>
            <person name="Kaufmann S."/>
            <person name="Henderson J."/>
            <person name="Somerville C."/>
        </authorList>
    </citation>
    <scope>IDENTIFICATION</scope>
</reference>
<reference key="6">
    <citation type="journal article" date="2006" name="Genetics">
        <title>Involvement of the Arabidopsis SWI2/SNF2 chromatin remodeling gene family in DNA damage response and recombination.</title>
        <authorList>
            <person name="Shaked H."/>
            <person name="Avivi-Ragolsky N."/>
            <person name="Levy A.A."/>
        </authorList>
    </citation>
    <scope>GENE FAMILY</scope>
    <scope>NOMENCLATURE</scope>
</reference>
<reference key="7">
    <citation type="journal article" date="2013" name="PLoS ONE">
        <title>Genome-wide comparative in silico analysis of the RNA helicase gene family in Zea mays and Glycine max: a comparison with Arabidopsis and Oryza sativa.</title>
        <authorList>
            <person name="Xu R."/>
            <person name="Zhang S."/>
            <person name="Huang J."/>
            <person name="Zheng C."/>
        </authorList>
    </citation>
    <scope>GENE FAMILY</scope>
</reference>
<evidence type="ECO:0000250" key="1">
    <source>
        <dbReference type="UniProtKB" id="Q8TDI0"/>
    </source>
</evidence>
<evidence type="ECO:0000255" key="2"/>
<evidence type="ECO:0000255" key="3">
    <source>
        <dbReference type="PROSITE-ProRule" id="PRU00053"/>
    </source>
</evidence>
<evidence type="ECO:0000255" key="4">
    <source>
        <dbReference type="PROSITE-ProRule" id="PRU00146"/>
    </source>
</evidence>
<evidence type="ECO:0000255" key="5">
    <source>
        <dbReference type="PROSITE-ProRule" id="PRU00541"/>
    </source>
</evidence>
<evidence type="ECO:0000255" key="6">
    <source>
        <dbReference type="PROSITE-ProRule" id="PRU00542"/>
    </source>
</evidence>
<evidence type="ECO:0000255" key="7">
    <source>
        <dbReference type="PROSITE-ProRule" id="PRU00768"/>
    </source>
</evidence>
<evidence type="ECO:0000256" key="8">
    <source>
        <dbReference type="SAM" id="MobiDB-lite"/>
    </source>
</evidence>
<evidence type="ECO:0000303" key="9">
    <source>
    </source>
</evidence>
<evidence type="ECO:0000303" key="10">
    <source>
    </source>
</evidence>
<evidence type="ECO:0000305" key="11"/>
<evidence type="ECO:0000312" key="12">
    <source>
        <dbReference type="Araport" id="AT5G44800"/>
    </source>
</evidence>
<evidence type="ECO:0000312" key="13">
    <source>
        <dbReference type="EMBL" id="AAC79140.1"/>
    </source>
</evidence>
<evidence type="ECO:0000312" key="14">
    <source>
        <dbReference type="EMBL" id="BAB08833.1"/>
    </source>
</evidence>
<evidence type="ECO:0000312" key="15">
    <source>
        <dbReference type="Proteomes" id="UP000006548"/>
    </source>
</evidence>